<accession>P30025</accession>
<reference key="1">
    <citation type="journal article" date="1992" name="J. Gen. Virol.">
        <title>Nucleotide sequence analysis of a homologue of herpes simplex virus type 1 gene US9 found in the genome of simian herpes B virus.</title>
        <authorList>
            <person name="Killeen A.M."/>
            <person name="Harrington L."/>
            <person name="Wall L.V.M."/>
            <person name="Kelly D.C."/>
        </authorList>
    </citation>
    <scope>NUCLEOTIDE SEQUENCE [GENOMIC DNA]</scope>
</reference>
<organism>
    <name type="scientific">Cercopithecine herpesvirus 1</name>
    <name type="common">CeHV-1</name>
    <name type="synonym">Simian herpes B virus</name>
    <dbReference type="NCBI Taxonomy" id="10325"/>
    <lineage>
        <taxon>Viruses</taxon>
        <taxon>Duplodnaviria</taxon>
        <taxon>Heunggongvirae</taxon>
        <taxon>Peploviricota</taxon>
        <taxon>Herviviricetes</taxon>
        <taxon>Herpesvirales</taxon>
        <taxon>Orthoherpesviridae</taxon>
        <taxon>Alphaherpesvirinae</taxon>
        <taxon>Simplexvirus</taxon>
        <taxon>Simplexvirus macacinealpha1</taxon>
    </lineage>
</organism>
<dbReference type="EMBL" id="S75996">
    <property type="protein sequence ID" value="AAB21002.1"/>
    <property type="molecule type" value="Genomic_DNA"/>
</dbReference>
<dbReference type="PIR" id="JQ1406">
    <property type="entry name" value="QQBECE"/>
</dbReference>
<dbReference type="SMR" id="P30025"/>
<dbReference type="GO" id="GO:0043657">
    <property type="term" value="C:host cell"/>
    <property type="evidence" value="ECO:0007669"/>
    <property type="project" value="GOC"/>
</dbReference>
<dbReference type="GO" id="GO:0044178">
    <property type="term" value="C:host cell Golgi membrane"/>
    <property type="evidence" value="ECO:0007669"/>
    <property type="project" value="UniProtKB-SubCell"/>
</dbReference>
<dbReference type="GO" id="GO:0020002">
    <property type="term" value="C:host cell plasma membrane"/>
    <property type="evidence" value="ECO:0007669"/>
    <property type="project" value="UniProtKB-SubCell"/>
</dbReference>
<dbReference type="GO" id="GO:0044171">
    <property type="term" value="C:host cell smooth endoplasmic reticulum membrane"/>
    <property type="evidence" value="ECO:0007669"/>
    <property type="project" value="UniProtKB-SubCell"/>
</dbReference>
<dbReference type="GO" id="GO:0016020">
    <property type="term" value="C:membrane"/>
    <property type="evidence" value="ECO:0007669"/>
    <property type="project" value="UniProtKB-KW"/>
</dbReference>
<dbReference type="GO" id="GO:0019031">
    <property type="term" value="C:viral envelope"/>
    <property type="evidence" value="ECO:0007669"/>
    <property type="project" value="UniProtKB-KW"/>
</dbReference>
<dbReference type="GO" id="GO:0055036">
    <property type="term" value="C:virion membrane"/>
    <property type="evidence" value="ECO:0007669"/>
    <property type="project" value="UniProtKB-SubCell"/>
</dbReference>
<dbReference type="GO" id="GO:0075733">
    <property type="term" value="P:intracellular transport of virus"/>
    <property type="evidence" value="ECO:0007669"/>
    <property type="project" value="InterPro"/>
</dbReference>
<dbReference type="InterPro" id="IPR009278">
    <property type="entry name" value="Herpes_US9"/>
</dbReference>
<dbReference type="Pfam" id="PF06072">
    <property type="entry name" value="Herpes_US9"/>
    <property type="match status" value="1"/>
</dbReference>
<proteinExistence type="inferred from homology"/>
<sequence length="90" mass="9930">MEPLRLADAESLLSETSVIPLTPPAQTPEAYYTESDDETAADFLVRMGRQQTAIRRRRRQTRAAGFVAAFVLVALISGGLGALMCWLAYR</sequence>
<protein>
    <recommendedName>
        <fullName>Envelope protein US9 homolog</fullName>
    </recommendedName>
    <alternativeName>
        <fullName>10 kDa protein</fullName>
    </alternativeName>
</protein>
<keyword id="KW-1032">Host cell membrane</keyword>
<keyword id="KW-1038">Host endoplasmic reticulum</keyword>
<keyword id="KW-1040">Host Golgi apparatus</keyword>
<keyword id="KW-1043">Host membrane</keyword>
<keyword id="KW-0472">Membrane</keyword>
<keyword id="KW-0735">Signal-anchor</keyword>
<keyword id="KW-0812">Transmembrane</keyword>
<keyword id="KW-1133">Transmembrane helix</keyword>
<keyword id="KW-0261">Viral envelope protein</keyword>
<keyword id="KW-0946">Virion</keyword>
<feature type="chain" id="PRO_0000116139" description="Envelope protein US9 homolog">
    <location>
        <begin position="1"/>
        <end position="90"/>
    </location>
</feature>
<feature type="topological domain" description="Intravirion" evidence="1">
    <location>
        <begin position="1"/>
        <end position="63"/>
    </location>
</feature>
<feature type="transmembrane region" description="Helical; Signal-anchor for type II membrane protein" evidence="1">
    <location>
        <begin position="64"/>
        <end position="84"/>
    </location>
</feature>
<feature type="topological domain" description="Virion surface" evidence="1">
    <location>
        <begin position="85"/>
        <end position="90"/>
    </location>
</feature>
<feature type="region of interest" description="Acidic">
    <location>
        <begin position="29"/>
        <end position="38"/>
    </location>
</feature>
<feature type="short sequence motif" description="Di-leucine internalization motif" evidence="2">
    <location>
        <begin position="12"/>
        <end position="13"/>
    </location>
</feature>
<name>US9_CHV1</name>
<comment type="function">
    <text evidence="1">Essential for the anterograde spread of the infection throughout the host nervous system. Together with the gE/gI heterodimer, US9 is involved in the sorting and transport of viral structural components toward axon tips (By similarity).</text>
</comment>
<comment type="subcellular location">
    <subcellularLocation>
        <location evidence="1">Virion membrane</location>
        <topology evidence="1">Single-pass type II membrane protein</topology>
    </subcellularLocation>
    <subcellularLocation>
        <location evidence="1">Host Golgi apparatus membrane</location>
        <topology evidence="1">Single-pass type II membrane protein</topology>
    </subcellularLocation>
    <subcellularLocation>
        <location evidence="1">Host smooth endoplasmic reticulum membrane</location>
        <topology evidence="1">Single-pass type II membrane protein</topology>
    </subcellularLocation>
    <subcellularLocation>
        <location evidence="3">Host cell membrane</location>
        <topology evidence="3">Single-pass type II membrane protein</topology>
    </subcellularLocation>
    <text>During virion morphogenesis, this protein probably accumulates in the endosomes and trans-Golgi where secondary envelopment occurs. It is probably transported to the cell surface from where it is endocytosed and directed to the trans-Golgi network (TGN), maybe through an interaction with PACS-1 sorting protein.</text>
</comment>
<comment type="PTM">
    <text evidence="3">Phosphorylated on serines within the acidic cluster. Phosphorylation determines whether endocytosed viral US9 traffics to the trans-Golgi network or recycles to the cell membrane.</text>
</comment>
<comment type="similarity">
    <text evidence="3">Belongs to the alphaherpesvirinae envelope protein US9 family.</text>
</comment>
<organismHost>
    <name type="scientific">Homo sapiens</name>
    <name type="common">Human</name>
    <dbReference type="NCBI Taxonomy" id="9606"/>
</organismHost>
<organismHost>
    <name type="scientific">Macaca fascicularis</name>
    <name type="common">Crab-eating macaque</name>
    <name type="synonym">Cynomolgus monkey</name>
    <dbReference type="NCBI Taxonomy" id="9541"/>
</organismHost>
<organismHost>
    <name type="scientific">Macaca leonina</name>
    <name type="common">Northern pig-tailed macaque</name>
    <name type="synonym">Macaca nemestrina leonina</name>
    <dbReference type="NCBI Taxonomy" id="90387"/>
</organismHost>
<organismHost>
    <name type="scientific">Macaca mulatta</name>
    <name type="common">Rhesus macaque</name>
    <dbReference type="NCBI Taxonomy" id="9544"/>
</organismHost>
<organismHost>
    <name type="scientific">Macaca nemestrina</name>
    <name type="common">Pig-tailed macaque</name>
    <dbReference type="NCBI Taxonomy" id="9545"/>
</organismHost>
<evidence type="ECO:0000250" key="1"/>
<evidence type="ECO:0000255" key="2"/>
<evidence type="ECO:0000305" key="3"/>